<accession>A5UFH8</accession>
<name>YBEY_HAEIG</name>
<comment type="function">
    <text evidence="1">Single strand-specific metallo-endoribonuclease involved in late-stage 70S ribosome quality control and in maturation of the 3' terminus of the 16S rRNA.</text>
</comment>
<comment type="cofactor">
    <cofactor evidence="1">
        <name>Zn(2+)</name>
        <dbReference type="ChEBI" id="CHEBI:29105"/>
    </cofactor>
    <text evidence="1">Binds 1 zinc ion.</text>
</comment>
<comment type="subcellular location">
    <subcellularLocation>
        <location evidence="1">Cytoplasm</location>
    </subcellularLocation>
</comment>
<comment type="similarity">
    <text evidence="1">Belongs to the endoribonuclease YbeY family.</text>
</comment>
<dbReference type="EC" id="3.1.-.-" evidence="1"/>
<dbReference type="EMBL" id="CP000672">
    <property type="protein sequence ID" value="ABQ99533.1"/>
    <property type="molecule type" value="Genomic_DNA"/>
</dbReference>
<dbReference type="BMRB" id="A5UFH8"/>
<dbReference type="SMR" id="A5UFH8"/>
<dbReference type="KEGG" id="hiq:CGSHiGG_02480"/>
<dbReference type="HOGENOM" id="CLU_106710_0_1_6"/>
<dbReference type="Proteomes" id="UP000001990">
    <property type="component" value="Chromosome"/>
</dbReference>
<dbReference type="GO" id="GO:0005737">
    <property type="term" value="C:cytoplasm"/>
    <property type="evidence" value="ECO:0007669"/>
    <property type="project" value="UniProtKB-SubCell"/>
</dbReference>
<dbReference type="GO" id="GO:0004222">
    <property type="term" value="F:metalloendopeptidase activity"/>
    <property type="evidence" value="ECO:0007669"/>
    <property type="project" value="InterPro"/>
</dbReference>
<dbReference type="GO" id="GO:0004521">
    <property type="term" value="F:RNA endonuclease activity"/>
    <property type="evidence" value="ECO:0007669"/>
    <property type="project" value="UniProtKB-UniRule"/>
</dbReference>
<dbReference type="GO" id="GO:0008270">
    <property type="term" value="F:zinc ion binding"/>
    <property type="evidence" value="ECO:0007669"/>
    <property type="project" value="UniProtKB-UniRule"/>
</dbReference>
<dbReference type="GO" id="GO:0006364">
    <property type="term" value="P:rRNA processing"/>
    <property type="evidence" value="ECO:0007669"/>
    <property type="project" value="UniProtKB-UniRule"/>
</dbReference>
<dbReference type="Gene3D" id="3.40.390.30">
    <property type="entry name" value="Metalloproteases ('zincins'), catalytic domain"/>
    <property type="match status" value="1"/>
</dbReference>
<dbReference type="HAMAP" id="MF_00009">
    <property type="entry name" value="Endoribonucl_YbeY"/>
    <property type="match status" value="1"/>
</dbReference>
<dbReference type="InterPro" id="IPR023091">
    <property type="entry name" value="MetalPrtase_cat_dom_sf_prd"/>
</dbReference>
<dbReference type="InterPro" id="IPR002036">
    <property type="entry name" value="YbeY"/>
</dbReference>
<dbReference type="InterPro" id="IPR020549">
    <property type="entry name" value="YbeY_CS"/>
</dbReference>
<dbReference type="NCBIfam" id="TIGR00043">
    <property type="entry name" value="rRNA maturation RNase YbeY"/>
    <property type="match status" value="1"/>
</dbReference>
<dbReference type="PANTHER" id="PTHR46986">
    <property type="entry name" value="ENDORIBONUCLEASE YBEY, CHLOROPLASTIC"/>
    <property type="match status" value="1"/>
</dbReference>
<dbReference type="PANTHER" id="PTHR46986:SF1">
    <property type="entry name" value="ENDORIBONUCLEASE YBEY, CHLOROPLASTIC"/>
    <property type="match status" value="1"/>
</dbReference>
<dbReference type="Pfam" id="PF02130">
    <property type="entry name" value="YbeY"/>
    <property type="match status" value="1"/>
</dbReference>
<dbReference type="SUPFAM" id="SSF55486">
    <property type="entry name" value="Metalloproteases ('zincins'), catalytic domain"/>
    <property type="match status" value="1"/>
</dbReference>
<dbReference type="PROSITE" id="PS01306">
    <property type="entry name" value="UPF0054"/>
    <property type="match status" value="1"/>
</dbReference>
<proteinExistence type="inferred from homology"/>
<organism>
    <name type="scientific">Haemophilus influenzae (strain PittGG)</name>
    <dbReference type="NCBI Taxonomy" id="374931"/>
    <lineage>
        <taxon>Bacteria</taxon>
        <taxon>Pseudomonadati</taxon>
        <taxon>Pseudomonadota</taxon>
        <taxon>Gammaproteobacteria</taxon>
        <taxon>Pasteurellales</taxon>
        <taxon>Pasteurellaceae</taxon>
        <taxon>Haemophilus</taxon>
    </lineage>
</organism>
<feature type="chain" id="PRO_1000000724" description="Endoribonuclease YbeY">
    <location>
        <begin position="1"/>
        <end position="154"/>
    </location>
</feature>
<feature type="binding site" evidence="1">
    <location>
        <position position="114"/>
    </location>
    <ligand>
        <name>Zn(2+)</name>
        <dbReference type="ChEBI" id="CHEBI:29105"/>
        <note>catalytic</note>
    </ligand>
</feature>
<feature type="binding site" evidence="1">
    <location>
        <position position="118"/>
    </location>
    <ligand>
        <name>Zn(2+)</name>
        <dbReference type="ChEBI" id="CHEBI:29105"/>
        <note>catalytic</note>
    </ligand>
</feature>
<feature type="binding site" evidence="1">
    <location>
        <position position="124"/>
    </location>
    <ligand>
        <name>Zn(2+)</name>
        <dbReference type="ChEBI" id="CHEBI:29105"/>
        <note>catalytic</note>
    </ligand>
</feature>
<reference key="1">
    <citation type="journal article" date="2007" name="Genome Biol.">
        <title>Characterization and modeling of the Haemophilus influenzae core and supragenomes based on the complete genomic sequences of Rd and 12 clinical nontypeable strains.</title>
        <authorList>
            <person name="Hogg J.S."/>
            <person name="Hu F.Z."/>
            <person name="Janto B."/>
            <person name="Boissy R."/>
            <person name="Hayes J."/>
            <person name="Keefe R."/>
            <person name="Post J.C."/>
            <person name="Ehrlich G.D."/>
        </authorList>
    </citation>
    <scope>NUCLEOTIDE SEQUENCE [LARGE SCALE GENOMIC DNA]</scope>
    <source>
        <strain>PittGG</strain>
    </source>
</reference>
<sequence length="154" mass="17355">MGSVLVDLQIATENIEGLPTEEQIVQWATGAVQPEGNEVEMTVRIVDEAESHELNLTYRGKDRPTNVLSFPFECPDEVELPLLGDLVICRQVVEREAAEQEKPLMAHWAHMVVHGCLHLLGYDHIEDDEAEEMESLETQIMQGLGFDDPYLAEK</sequence>
<keyword id="KW-0963">Cytoplasm</keyword>
<keyword id="KW-0255">Endonuclease</keyword>
<keyword id="KW-0378">Hydrolase</keyword>
<keyword id="KW-0479">Metal-binding</keyword>
<keyword id="KW-0540">Nuclease</keyword>
<keyword id="KW-0690">Ribosome biogenesis</keyword>
<keyword id="KW-0698">rRNA processing</keyword>
<keyword id="KW-0862">Zinc</keyword>
<protein>
    <recommendedName>
        <fullName evidence="1">Endoribonuclease YbeY</fullName>
        <ecNumber evidence="1">3.1.-.-</ecNumber>
    </recommendedName>
</protein>
<gene>
    <name evidence="1" type="primary">ybeY</name>
    <name type="ordered locus">CGSHiGG_02480</name>
</gene>
<evidence type="ECO:0000255" key="1">
    <source>
        <dbReference type="HAMAP-Rule" id="MF_00009"/>
    </source>
</evidence>